<comment type="function">
    <text evidence="1">Exhibits a very high intrinsic GTPase hydrolysis rate. Involved in the addition of a carboxymethylaminomethyl (cmnm) group at the wobble position (U34) of certain tRNAs, forming tRNA-cmnm(5)s(2)U34.</text>
</comment>
<comment type="cofactor">
    <cofactor evidence="1">
        <name>K(+)</name>
        <dbReference type="ChEBI" id="CHEBI:29103"/>
    </cofactor>
    <text evidence="1">Binds 1 potassium ion per subunit.</text>
</comment>
<comment type="subunit">
    <text evidence="1">Homodimer. Heterotetramer of two MnmE and two MnmG subunits.</text>
</comment>
<comment type="subcellular location">
    <subcellularLocation>
        <location evidence="1">Cytoplasm</location>
    </subcellularLocation>
</comment>
<comment type="similarity">
    <text evidence="1">Belongs to the TRAFAC class TrmE-Era-EngA-EngB-Septin-like GTPase superfamily. TrmE GTPase family.</text>
</comment>
<gene>
    <name evidence="1" type="primary">mnmE</name>
    <name evidence="1" type="synonym">trmE</name>
    <name type="ordered locus">M446_1411</name>
</gene>
<sequence length="437" mass="45228">MTDTIFAPASGFGRAAVAVIRISGPGAASCLTALTGHPPPLPRRLSLRQLRDPGTGEVLDRALVVWLPGPATFTGEDSAELHLHGGAAVRAAVLRVLGRLPGLAPAEPGAFTRRAFLNGRMDLTAVEGLADLIDAETEAQRRQAMRQLDGALGRLVEAWRDTLLGVLAGAEAALDFSDEGDVDESALSASGLAAAARVRDAILAALAEGRRGERLREGFVVVLAGPPNAGKSTLLNALARREAAIVSPIPGTTRDAIEVRCDLDGLPVLLVDTAGLRDEGADPIEAEGMARSRRRIEEADLVLWLVPPEGGAAAPKGALVVHTKRDLGRDPGGGVDGALAISALTGEGLAMLLDRVAAAAGAALGRGDAVVTRERQRRALEECAAHLGRAIAGAETMPAELVAEDLRLAVRALGAVAGRVGVEEMLDRLFSSFCIGK</sequence>
<accession>B0UJI9</accession>
<feature type="chain" id="PRO_0000345834" description="tRNA modification GTPase MnmE">
    <location>
        <begin position="1"/>
        <end position="437"/>
    </location>
</feature>
<feature type="domain" description="TrmE-type G">
    <location>
        <begin position="218"/>
        <end position="361"/>
    </location>
</feature>
<feature type="binding site" evidence="1">
    <location>
        <position position="21"/>
    </location>
    <ligand>
        <name>(6S)-5-formyl-5,6,7,8-tetrahydrofolate</name>
        <dbReference type="ChEBI" id="CHEBI:57457"/>
    </ligand>
</feature>
<feature type="binding site" evidence="1">
    <location>
        <position position="80"/>
    </location>
    <ligand>
        <name>(6S)-5-formyl-5,6,7,8-tetrahydrofolate</name>
        <dbReference type="ChEBI" id="CHEBI:57457"/>
    </ligand>
</feature>
<feature type="binding site" evidence="1">
    <location>
        <position position="120"/>
    </location>
    <ligand>
        <name>(6S)-5-formyl-5,6,7,8-tetrahydrofolate</name>
        <dbReference type="ChEBI" id="CHEBI:57457"/>
    </ligand>
</feature>
<feature type="binding site" evidence="1">
    <location>
        <begin position="228"/>
        <end position="233"/>
    </location>
    <ligand>
        <name>GTP</name>
        <dbReference type="ChEBI" id="CHEBI:37565"/>
    </ligand>
</feature>
<feature type="binding site" evidence="1">
    <location>
        <position position="228"/>
    </location>
    <ligand>
        <name>K(+)</name>
        <dbReference type="ChEBI" id="CHEBI:29103"/>
    </ligand>
</feature>
<feature type="binding site" evidence="1">
    <location>
        <position position="232"/>
    </location>
    <ligand>
        <name>Mg(2+)</name>
        <dbReference type="ChEBI" id="CHEBI:18420"/>
    </ligand>
</feature>
<feature type="binding site" evidence="1">
    <location>
        <begin position="247"/>
        <end position="253"/>
    </location>
    <ligand>
        <name>GTP</name>
        <dbReference type="ChEBI" id="CHEBI:37565"/>
    </ligand>
</feature>
<feature type="binding site" evidence="1">
    <location>
        <position position="247"/>
    </location>
    <ligand>
        <name>K(+)</name>
        <dbReference type="ChEBI" id="CHEBI:29103"/>
    </ligand>
</feature>
<feature type="binding site" evidence="1">
    <location>
        <position position="249"/>
    </location>
    <ligand>
        <name>K(+)</name>
        <dbReference type="ChEBI" id="CHEBI:29103"/>
    </ligand>
</feature>
<feature type="binding site" evidence="1">
    <location>
        <position position="252"/>
    </location>
    <ligand>
        <name>K(+)</name>
        <dbReference type="ChEBI" id="CHEBI:29103"/>
    </ligand>
</feature>
<feature type="binding site" evidence="1">
    <location>
        <position position="253"/>
    </location>
    <ligand>
        <name>Mg(2+)</name>
        <dbReference type="ChEBI" id="CHEBI:18420"/>
    </ligand>
</feature>
<feature type="binding site" evidence="1">
    <location>
        <begin position="272"/>
        <end position="275"/>
    </location>
    <ligand>
        <name>GTP</name>
        <dbReference type="ChEBI" id="CHEBI:37565"/>
    </ligand>
</feature>
<feature type="binding site" evidence="1">
    <location>
        <position position="437"/>
    </location>
    <ligand>
        <name>(6S)-5-formyl-5,6,7,8-tetrahydrofolate</name>
        <dbReference type="ChEBI" id="CHEBI:57457"/>
    </ligand>
</feature>
<organism>
    <name type="scientific">Methylobacterium sp. (strain 4-46)</name>
    <dbReference type="NCBI Taxonomy" id="426117"/>
    <lineage>
        <taxon>Bacteria</taxon>
        <taxon>Pseudomonadati</taxon>
        <taxon>Pseudomonadota</taxon>
        <taxon>Alphaproteobacteria</taxon>
        <taxon>Hyphomicrobiales</taxon>
        <taxon>Methylobacteriaceae</taxon>
        <taxon>Methylobacterium</taxon>
    </lineage>
</organism>
<proteinExistence type="inferred from homology"/>
<keyword id="KW-0963">Cytoplasm</keyword>
<keyword id="KW-0342">GTP-binding</keyword>
<keyword id="KW-0378">Hydrolase</keyword>
<keyword id="KW-0460">Magnesium</keyword>
<keyword id="KW-0479">Metal-binding</keyword>
<keyword id="KW-0547">Nucleotide-binding</keyword>
<keyword id="KW-0630">Potassium</keyword>
<keyword id="KW-0819">tRNA processing</keyword>
<reference key="1">
    <citation type="submission" date="2008-02" db="EMBL/GenBank/DDBJ databases">
        <title>Complete sequence of chromosome of Methylobacterium sp. 4-46.</title>
        <authorList>
            <consortium name="US DOE Joint Genome Institute"/>
            <person name="Copeland A."/>
            <person name="Lucas S."/>
            <person name="Lapidus A."/>
            <person name="Glavina del Rio T."/>
            <person name="Dalin E."/>
            <person name="Tice H."/>
            <person name="Bruce D."/>
            <person name="Goodwin L."/>
            <person name="Pitluck S."/>
            <person name="Chertkov O."/>
            <person name="Brettin T."/>
            <person name="Detter J.C."/>
            <person name="Han C."/>
            <person name="Kuske C.R."/>
            <person name="Schmutz J."/>
            <person name="Larimer F."/>
            <person name="Land M."/>
            <person name="Hauser L."/>
            <person name="Kyrpides N."/>
            <person name="Ivanova N."/>
            <person name="Marx C.J."/>
            <person name="Richardson P."/>
        </authorList>
    </citation>
    <scope>NUCLEOTIDE SEQUENCE [LARGE SCALE GENOMIC DNA]</scope>
    <source>
        <strain>4-46</strain>
    </source>
</reference>
<evidence type="ECO:0000255" key="1">
    <source>
        <dbReference type="HAMAP-Rule" id="MF_00379"/>
    </source>
</evidence>
<name>MNME_METS4</name>
<protein>
    <recommendedName>
        <fullName evidence="1">tRNA modification GTPase MnmE</fullName>
        <ecNumber evidence="1">3.6.-.-</ecNumber>
    </recommendedName>
</protein>
<dbReference type="EC" id="3.6.-.-" evidence="1"/>
<dbReference type="EMBL" id="CP000943">
    <property type="protein sequence ID" value="ACA15927.1"/>
    <property type="molecule type" value="Genomic_DNA"/>
</dbReference>
<dbReference type="RefSeq" id="WP_012331344.1">
    <property type="nucleotide sequence ID" value="NC_010511.1"/>
</dbReference>
<dbReference type="SMR" id="B0UJI9"/>
<dbReference type="STRING" id="426117.M446_1411"/>
<dbReference type="KEGG" id="met:M446_1411"/>
<dbReference type="eggNOG" id="COG0486">
    <property type="taxonomic scope" value="Bacteria"/>
</dbReference>
<dbReference type="HOGENOM" id="CLU_019624_3_1_5"/>
<dbReference type="GO" id="GO:0005737">
    <property type="term" value="C:cytoplasm"/>
    <property type="evidence" value="ECO:0007669"/>
    <property type="project" value="UniProtKB-SubCell"/>
</dbReference>
<dbReference type="GO" id="GO:0005525">
    <property type="term" value="F:GTP binding"/>
    <property type="evidence" value="ECO:0007669"/>
    <property type="project" value="UniProtKB-UniRule"/>
</dbReference>
<dbReference type="GO" id="GO:0003924">
    <property type="term" value="F:GTPase activity"/>
    <property type="evidence" value="ECO:0007669"/>
    <property type="project" value="UniProtKB-UniRule"/>
</dbReference>
<dbReference type="GO" id="GO:0046872">
    <property type="term" value="F:metal ion binding"/>
    <property type="evidence" value="ECO:0007669"/>
    <property type="project" value="UniProtKB-KW"/>
</dbReference>
<dbReference type="GO" id="GO:0030488">
    <property type="term" value="P:tRNA methylation"/>
    <property type="evidence" value="ECO:0007669"/>
    <property type="project" value="TreeGrafter"/>
</dbReference>
<dbReference type="GO" id="GO:0002098">
    <property type="term" value="P:tRNA wobble uridine modification"/>
    <property type="evidence" value="ECO:0007669"/>
    <property type="project" value="TreeGrafter"/>
</dbReference>
<dbReference type="CDD" id="cd04164">
    <property type="entry name" value="trmE"/>
    <property type="match status" value="1"/>
</dbReference>
<dbReference type="CDD" id="cd14858">
    <property type="entry name" value="TrmE_N"/>
    <property type="match status" value="1"/>
</dbReference>
<dbReference type="FunFam" id="3.30.1360.120:FF:000007">
    <property type="entry name" value="tRNA modification GTPase GTPBP3, mitochondrial"/>
    <property type="match status" value="1"/>
</dbReference>
<dbReference type="Gene3D" id="3.40.50.300">
    <property type="entry name" value="P-loop containing nucleotide triphosphate hydrolases"/>
    <property type="match status" value="1"/>
</dbReference>
<dbReference type="Gene3D" id="3.30.1360.120">
    <property type="entry name" value="Probable tRNA modification gtpase trme, domain 1"/>
    <property type="match status" value="1"/>
</dbReference>
<dbReference type="Gene3D" id="1.20.120.430">
    <property type="entry name" value="tRNA modification GTPase MnmE domain 2"/>
    <property type="match status" value="1"/>
</dbReference>
<dbReference type="HAMAP" id="MF_00379">
    <property type="entry name" value="GTPase_MnmE"/>
    <property type="match status" value="1"/>
</dbReference>
<dbReference type="InterPro" id="IPR031168">
    <property type="entry name" value="G_TrmE"/>
</dbReference>
<dbReference type="InterPro" id="IPR006073">
    <property type="entry name" value="GTP-bd"/>
</dbReference>
<dbReference type="InterPro" id="IPR018948">
    <property type="entry name" value="GTP-bd_TrmE_N"/>
</dbReference>
<dbReference type="InterPro" id="IPR004520">
    <property type="entry name" value="GTPase_MnmE"/>
</dbReference>
<dbReference type="InterPro" id="IPR027368">
    <property type="entry name" value="MnmE_dom2"/>
</dbReference>
<dbReference type="InterPro" id="IPR025867">
    <property type="entry name" value="MnmE_helical"/>
</dbReference>
<dbReference type="InterPro" id="IPR027417">
    <property type="entry name" value="P-loop_NTPase"/>
</dbReference>
<dbReference type="InterPro" id="IPR005225">
    <property type="entry name" value="Small_GTP-bd"/>
</dbReference>
<dbReference type="InterPro" id="IPR027266">
    <property type="entry name" value="TrmE/GcvT_dom1"/>
</dbReference>
<dbReference type="NCBIfam" id="NF003661">
    <property type="entry name" value="PRK05291.1-3"/>
    <property type="match status" value="1"/>
</dbReference>
<dbReference type="NCBIfam" id="TIGR00231">
    <property type="entry name" value="small_GTP"/>
    <property type="match status" value="1"/>
</dbReference>
<dbReference type="PANTHER" id="PTHR42714">
    <property type="entry name" value="TRNA MODIFICATION GTPASE GTPBP3"/>
    <property type="match status" value="1"/>
</dbReference>
<dbReference type="PANTHER" id="PTHR42714:SF2">
    <property type="entry name" value="TRNA MODIFICATION GTPASE GTPBP3, MITOCHONDRIAL"/>
    <property type="match status" value="1"/>
</dbReference>
<dbReference type="Pfam" id="PF01926">
    <property type="entry name" value="MMR_HSR1"/>
    <property type="match status" value="1"/>
</dbReference>
<dbReference type="Pfam" id="PF12631">
    <property type="entry name" value="MnmE_helical"/>
    <property type="match status" value="1"/>
</dbReference>
<dbReference type="Pfam" id="PF10396">
    <property type="entry name" value="TrmE_N"/>
    <property type="match status" value="1"/>
</dbReference>
<dbReference type="SUPFAM" id="SSF103025">
    <property type="entry name" value="Folate-binding domain"/>
    <property type="match status" value="1"/>
</dbReference>
<dbReference type="SUPFAM" id="SSF52540">
    <property type="entry name" value="P-loop containing nucleoside triphosphate hydrolases"/>
    <property type="match status" value="1"/>
</dbReference>
<dbReference type="SUPFAM" id="SSF116878">
    <property type="entry name" value="TrmE connector domain"/>
    <property type="match status" value="1"/>
</dbReference>
<dbReference type="PROSITE" id="PS51709">
    <property type="entry name" value="G_TRME"/>
    <property type="match status" value="1"/>
</dbReference>